<feature type="chain" id="PRO_0000286265" description="Spermidine/putrescine import ATP-binding protein PotA">
    <location>
        <begin position="1"/>
        <end position="363"/>
    </location>
</feature>
<feature type="domain" description="ABC transporter" evidence="1">
    <location>
        <begin position="4"/>
        <end position="234"/>
    </location>
</feature>
<feature type="binding site" evidence="1">
    <location>
        <begin position="36"/>
        <end position="43"/>
    </location>
    <ligand>
        <name>ATP</name>
        <dbReference type="ChEBI" id="CHEBI:30616"/>
    </ligand>
</feature>
<proteinExistence type="inferred from homology"/>
<reference key="1">
    <citation type="journal article" date="2007" name="Environ. Microbiol.">
        <title>Whole-genome analysis of the ammonia-oxidizing bacterium, Nitrosomonas eutropha C91: implications for niche adaptation.</title>
        <authorList>
            <person name="Stein L.Y."/>
            <person name="Arp D.J."/>
            <person name="Berube P.M."/>
            <person name="Chain P.S."/>
            <person name="Hauser L."/>
            <person name="Jetten M.S."/>
            <person name="Klotz M.G."/>
            <person name="Larimer F.W."/>
            <person name="Norton J.M."/>
            <person name="Op den Camp H.J.M."/>
            <person name="Shin M."/>
            <person name="Wei X."/>
        </authorList>
    </citation>
    <scope>NUCLEOTIDE SEQUENCE [LARGE SCALE GENOMIC DNA]</scope>
    <source>
        <strain>DSM 101675 / C91 / Nm57</strain>
    </source>
</reference>
<sequence>MALLELRNVIRRFGDFTAVDNVSLSIQAGEFFTLLGPSGCGKTTLLRMIAGFDVPDSGQILLDGQDIANTPPEKRPIHTVFQSYALFPHMTVADNVAFPLKMSKVAPAEIKKRMEKALEEVQLSRFTHRFPHELSGGQKQRVAFARGLINRPRLLLMDEPLGALDAKLREDMQRELINLQKEVGITFIFVTHSQDEALALSQRIAVMNLGNIEQIGTPSAIYGTPANRFIADFIGKINLMEARVTQISNTAMTLEINGLGTTVLPPKKEIQAGDQGVIAIRPEQVAVHALAKQAEIPHAHTGKVLDFLYVGDVTTYVIELDSGIQIEALLANSSPGRARFFEVDDPVIVSWPQEAAQFLVDRP</sequence>
<name>POTA_NITEC</name>
<organism>
    <name type="scientific">Nitrosomonas eutropha (strain DSM 101675 / C91 / Nm57)</name>
    <dbReference type="NCBI Taxonomy" id="335283"/>
    <lineage>
        <taxon>Bacteria</taxon>
        <taxon>Pseudomonadati</taxon>
        <taxon>Pseudomonadota</taxon>
        <taxon>Betaproteobacteria</taxon>
        <taxon>Nitrosomonadales</taxon>
        <taxon>Nitrosomonadaceae</taxon>
        <taxon>Nitrosomonas</taxon>
    </lineage>
</organism>
<keyword id="KW-0067">ATP-binding</keyword>
<keyword id="KW-0997">Cell inner membrane</keyword>
<keyword id="KW-1003">Cell membrane</keyword>
<keyword id="KW-0472">Membrane</keyword>
<keyword id="KW-0547">Nucleotide-binding</keyword>
<keyword id="KW-1278">Translocase</keyword>
<keyword id="KW-0813">Transport</keyword>
<dbReference type="EC" id="7.6.2.11" evidence="1"/>
<dbReference type="EMBL" id="CP000450">
    <property type="protein sequence ID" value="ABI59578.1"/>
    <property type="molecule type" value="Genomic_DNA"/>
</dbReference>
<dbReference type="RefSeq" id="WP_011634386.1">
    <property type="nucleotide sequence ID" value="NC_008344.1"/>
</dbReference>
<dbReference type="SMR" id="Q0AGF4"/>
<dbReference type="STRING" id="335283.Neut_1328"/>
<dbReference type="KEGG" id="net:Neut_1328"/>
<dbReference type="eggNOG" id="COG3842">
    <property type="taxonomic scope" value="Bacteria"/>
</dbReference>
<dbReference type="HOGENOM" id="CLU_000604_1_1_4"/>
<dbReference type="OrthoDB" id="5298774at2"/>
<dbReference type="Proteomes" id="UP000001966">
    <property type="component" value="Chromosome"/>
</dbReference>
<dbReference type="GO" id="GO:0043190">
    <property type="term" value="C:ATP-binding cassette (ABC) transporter complex"/>
    <property type="evidence" value="ECO:0007669"/>
    <property type="project" value="InterPro"/>
</dbReference>
<dbReference type="GO" id="GO:0015594">
    <property type="term" value="F:ABC-type putrescine transporter activity"/>
    <property type="evidence" value="ECO:0007669"/>
    <property type="project" value="InterPro"/>
</dbReference>
<dbReference type="GO" id="GO:0005524">
    <property type="term" value="F:ATP binding"/>
    <property type="evidence" value="ECO:0007669"/>
    <property type="project" value="UniProtKB-KW"/>
</dbReference>
<dbReference type="GO" id="GO:0016887">
    <property type="term" value="F:ATP hydrolysis activity"/>
    <property type="evidence" value="ECO:0007669"/>
    <property type="project" value="InterPro"/>
</dbReference>
<dbReference type="CDD" id="cd03300">
    <property type="entry name" value="ABC_PotA_N"/>
    <property type="match status" value="1"/>
</dbReference>
<dbReference type="FunFam" id="3.40.50.300:FF:000133">
    <property type="entry name" value="Spermidine/putrescine import ATP-binding protein PotA"/>
    <property type="match status" value="1"/>
</dbReference>
<dbReference type="Gene3D" id="2.40.50.100">
    <property type="match status" value="1"/>
</dbReference>
<dbReference type="Gene3D" id="3.40.50.300">
    <property type="entry name" value="P-loop containing nucleotide triphosphate hydrolases"/>
    <property type="match status" value="1"/>
</dbReference>
<dbReference type="InterPro" id="IPR003593">
    <property type="entry name" value="AAA+_ATPase"/>
</dbReference>
<dbReference type="InterPro" id="IPR050093">
    <property type="entry name" value="ABC_SmlMolc_Importer"/>
</dbReference>
<dbReference type="InterPro" id="IPR003439">
    <property type="entry name" value="ABC_transporter-like_ATP-bd"/>
</dbReference>
<dbReference type="InterPro" id="IPR017871">
    <property type="entry name" value="ABC_transporter-like_CS"/>
</dbReference>
<dbReference type="InterPro" id="IPR008995">
    <property type="entry name" value="Mo/tungstate-bd_C_term_dom"/>
</dbReference>
<dbReference type="InterPro" id="IPR027417">
    <property type="entry name" value="P-loop_NTPase"/>
</dbReference>
<dbReference type="InterPro" id="IPR005893">
    <property type="entry name" value="PotA-like"/>
</dbReference>
<dbReference type="InterPro" id="IPR017879">
    <property type="entry name" value="PotA_ATP-bd"/>
</dbReference>
<dbReference type="InterPro" id="IPR013611">
    <property type="entry name" value="Transp-assoc_OB_typ2"/>
</dbReference>
<dbReference type="NCBIfam" id="TIGR01187">
    <property type="entry name" value="potA"/>
    <property type="match status" value="1"/>
</dbReference>
<dbReference type="PANTHER" id="PTHR42781">
    <property type="entry name" value="SPERMIDINE/PUTRESCINE IMPORT ATP-BINDING PROTEIN POTA"/>
    <property type="match status" value="1"/>
</dbReference>
<dbReference type="PANTHER" id="PTHR42781:SF4">
    <property type="entry name" value="SPERMIDINE_PUTRESCINE IMPORT ATP-BINDING PROTEIN POTA"/>
    <property type="match status" value="1"/>
</dbReference>
<dbReference type="Pfam" id="PF00005">
    <property type="entry name" value="ABC_tran"/>
    <property type="match status" value="1"/>
</dbReference>
<dbReference type="Pfam" id="PF08402">
    <property type="entry name" value="TOBE_2"/>
    <property type="match status" value="1"/>
</dbReference>
<dbReference type="SMART" id="SM00382">
    <property type="entry name" value="AAA"/>
    <property type="match status" value="1"/>
</dbReference>
<dbReference type="SUPFAM" id="SSF50331">
    <property type="entry name" value="MOP-like"/>
    <property type="match status" value="1"/>
</dbReference>
<dbReference type="SUPFAM" id="SSF52540">
    <property type="entry name" value="P-loop containing nucleoside triphosphate hydrolases"/>
    <property type="match status" value="1"/>
</dbReference>
<dbReference type="PROSITE" id="PS00211">
    <property type="entry name" value="ABC_TRANSPORTER_1"/>
    <property type="match status" value="1"/>
</dbReference>
<dbReference type="PROSITE" id="PS50893">
    <property type="entry name" value="ABC_TRANSPORTER_2"/>
    <property type="match status" value="1"/>
</dbReference>
<dbReference type="PROSITE" id="PS51305">
    <property type="entry name" value="POTA"/>
    <property type="match status" value="1"/>
</dbReference>
<protein>
    <recommendedName>
        <fullName evidence="1">Spermidine/putrescine import ATP-binding protein PotA</fullName>
        <ecNumber evidence="1">7.6.2.11</ecNumber>
    </recommendedName>
</protein>
<gene>
    <name evidence="1" type="primary">potA</name>
    <name type="ordered locus">Neut_1328</name>
</gene>
<accession>Q0AGF4</accession>
<evidence type="ECO:0000255" key="1">
    <source>
        <dbReference type="HAMAP-Rule" id="MF_01726"/>
    </source>
</evidence>
<comment type="function">
    <text evidence="1">Part of the ABC transporter complex PotABCD involved in spermidine/putrescine import. Responsible for energy coupling to the transport system.</text>
</comment>
<comment type="catalytic activity">
    <reaction evidence="1">
        <text>ATP + H2O + polyamine-[polyamine-binding protein]Side 1 = ADP + phosphate + polyamineSide 2 + [polyamine-binding protein]Side 1.</text>
        <dbReference type="EC" id="7.6.2.11"/>
    </reaction>
</comment>
<comment type="subunit">
    <text evidence="1">The complex is composed of two ATP-binding proteins (PotA), two transmembrane proteins (PotB and PotC) and a solute-binding protein (PotD).</text>
</comment>
<comment type="subcellular location">
    <subcellularLocation>
        <location evidence="1">Cell inner membrane</location>
        <topology evidence="1">Peripheral membrane protein</topology>
    </subcellularLocation>
</comment>
<comment type="similarity">
    <text evidence="1">Belongs to the ABC transporter superfamily. Spermidine/putrescine importer (TC 3.A.1.11.1) family.</text>
</comment>